<dbReference type="EMBL" id="AE017226">
    <property type="protein sequence ID" value="AAS11124.1"/>
    <property type="status" value="ALT_INIT"/>
    <property type="molecule type" value="Genomic_DNA"/>
</dbReference>
<dbReference type="RefSeq" id="NP_971243.1">
    <property type="nucleotide sequence ID" value="NC_002967.9"/>
</dbReference>
<dbReference type="SMR" id="Q73Q15"/>
<dbReference type="STRING" id="243275.TDE_0629"/>
<dbReference type="PaxDb" id="243275-TDE_0629"/>
<dbReference type="KEGG" id="tde:TDE_0629"/>
<dbReference type="PATRIC" id="fig|243275.7.peg.607"/>
<dbReference type="eggNOG" id="COG0484">
    <property type="taxonomic scope" value="Bacteria"/>
</dbReference>
<dbReference type="HOGENOM" id="CLU_017633_0_7_12"/>
<dbReference type="OrthoDB" id="9779889at2"/>
<dbReference type="Proteomes" id="UP000008212">
    <property type="component" value="Chromosome"/>
</dbReference>
<dbReference type="GO" id="GO:0005737">
    <property type="term" value="C:cytoplasm"/>
    <property type="evidence" value="ECO:0007669"/>
    <property type="project" value="UniProtKB-SubCell"/>
</dbReference>
<dbReference type="GO" id="GO:0005524">
    <property type="term" value="F:ATP binding"/>
    <property type="evidence" value="ECO:0007669"/>
    <property type="project" value="InterPro"/>
</dbReference>
<dbReference type="GO" id="GO:0031072">
    <property type="term" value="F:heat shock protein binding"/>
    <property type="evidence" value="ECO:0007669"/>
    <property type="project" value="InterPro"/>
</dbReference>
<dbReference type="GO" id="GO:0051082">
    <property type="term" value="F:unfolded protein binding"/>
    <property type="evidence" value="ECO:0007669"/>
    <property type="project" value="UniProtKB-UniRule"/>
</dbReference>
<dbReference type="GO" id="GO:0008270">
    <property type="term" value="F:zinc ion binding"/>
    <property type="evidence" value="ECO:0007669"/>
    <property type="project" value="UniProtKB-UniRule"/>
</dbReference>
<dbReference type="GO" id="GO:0051085">
    <property type="term" value="P:chaperone cofactor-dependent protein refolding"/>
    <property type="evidence" value="ECO:0007669"/>
    <property type="project" value="TreeGrafter"/>
</dbReference>
<dbReference type="GO" id="GO:0006260">
    <property type="term" value="P:DNA replication"/>
    <property type="evidence" value="ECO:0007669"/>
    <property type="project" value="UniProtKB-KW"/>
</dbReference>
<dbReference type="GO" id="GO:0042026">
    <property type="term" value="P:protein refolding"/>
    <property type="evidence" value="ECO:0007669"/>
    <property type="project" value="TreeGrafter"/>
</dbReference>
<dbReference type="GO" id="GO:0009408">
    <property type="term" value="P:response to heat"/>
    <property type="evidence" value="ECO:0007669"/>
    <property type="project" value="InterPro"/>
</dbReference>
<dbReference type="CDD" id="cd06257">
    <property type="entry name" value="DnaJ"/>
    <property type="match status" value="1"/>
</dbReference>
<dbReference type="CDD" id="cd10747">
    <property type="entry name" value="DnaJ_C"/>
    <property type="match status" value="1"/>
</dbReference>
<dbReference type="CDD" id="cd10719">
    <property type="entry name" value="DnaJ_zf"/>
    <property type="match status" value="1"/>
</dbReference>
<dbReference type="FunFam" id="1.10.287.110:FF:000034">
    <property type="entry name" value="Chaperone protein DnaJ"/>
    <property type="match status" value="1"/>
</dbReference>
<dbReference type="FunFam" id="2.60.260.20:FF:000005">
    <property type="entry name" value="Chaperone protein dnaJ 1, mitochondrial"/>
    <property type="match status" value="1"/>
</dbReference>
<dbReference type="FunFam" id="2.10.230.10:FF:000002">
    <property type="entry name" value="Molecular chaperone DnaJ"/>
    <property type="match status" value="1"/>
</dbReference>
<dbReference type="Gene3D" id="1.10.287.110">
    <property type="entry name" value="DnaJ domain"/>
    <property type="match status" value="1"/>
</dbReference>
<dbReference type="Gene3D" id="2.10.230.10">
    <property type="entry name" value="Heat shock protein DnaJ, cysteine-rich domain"/>
    <property type="match status" value="1"/>
</dbReference>
<dbReference type="Gene3D" id="2.60.260.20">
    <property type="entry name" value="Urease metallochaperone UreE, N-terminal domain"/>
    <property type="match status" value="2"/>
</dbReference>
<dbReference type="HAMAP" id="MF_01152">
    <property type="entry name" value="DnaJ"/>
    <property type="match status" value="1"/>
</dbReference>
<dbReference type="InterPro" id="IPR012724">
    <property type="entry name" value="DnaJ"/>
</dbReference>
<dbReference type="InterPro" id="IPR002939">
    <property type="entry name" value="DnaJ_C"/>
</dbReference>
<dbReference type="InterPro" id="IPR001623">
    <property type="entry name" value="DnaJ_domain"/>
</dbReference>
<dbReference type="InterPro" id="IPR018253">
    <property type="entry name" value="DnaJ_domain_CS"/>
</dbReference>
<dbReference type="InterPro" id="IPR008971">
    <property type="entry name" value="HSP40/DnaJ_pept-bd"/>
</dbReference>
<dbReference type="InterPro" id="IPR001305">
    <property type="entry name" value="HSP_DnaJ_Cys-rich_dom"/>
</dbReference>
<dbReference type="InterPro" id="IPR036410">
    <property type="entry name" value="HSP_DnaJ_Cys-rich_dom_sf"/>
</dbReference>
<dbReference type="InterPro" id="IPR036869">
    <property type="entry name" value="J_dom_sf"/>
</dbReference>
<dbReference type="NCBIfam" id="TIGR02349">
    <property type="entry name" value="DnaJ_bact"/>
    <property type="match status" value="1"/>
</dbReference>
<dbReference type="NCBIfam" id="NF008035">
    <property type="entry name" value="PRK10767.1"/>
    <property type="match status" value="1"/>
</dbReference>
<dbReference type="PANTHER" id="PTHR43096">
    <property type="entry name" value="DNAJ HOMOLOG 1, MITOCHONDRIAL-RELATED"/>
    <property type="match status" value="1"/>
</dbReference>
<dbReference type="PANTHER" id="PTHR43096:SF52">
    <property type="entry name" value="DNAJ HOMOLOG 1, MITOCHONDRIAL-RELATED"/>
    <property type="match status" value="1"/>
</dbReference>
<dbReference type="Pfam" id="PF00226">
    <property type="entry name" value="DnaJ"/>
    <property type="match status" value="1"/>
</dbReference>
<dbReference type="Pfam" id="PF01556">
    <property type="entry name" value="DnaJ_C"/>
    <property type="match status" value="1"/>
</dbReference>
<dbReference type="Pfam" id="PF00684">
    <property type="entry name" value="DnaJ_CXXCXGXG"/>
    <property type="match status" value="1"/>
</dbReference>
<dbReference type="PRINTS" id="PR00625">
    <property type="entry name" value="JDOMAIN"/>
</dbReference>
<dbReference type="SMART" id="SM00271">
    <property type="entry name" value="DnaJ"/>
    <property type="match status" value="1"/>
</dbReference>
<dbReference type="SUPFAM" id="SSF46565">
    <property type="entry name" value="Chaperone J-domain"/>
    <property type="match status" value="1"/>
</dbReference>
<dbReference type="SUPFAM" id="SSF57938">
    <property type="entry name" value="DnaJ/Hsp40 cysteine-rich domain"/>
    <property type="match status" value="1"/>
</dbReference>
<dbReference type="SUPFAM" id="SSF49493">
    <property type="entry name" value="HSP40/DnaJ peptide-binding domain"/>
    <property type="match status" value="2"/>
</dbReference>
<dbReference type="PROSITE" id="PS00636">
    <property type="entry name" value="DNAJ_1"/>
    <property type="match status" value="1"/>
</dbReference>
<dbReference type="PROSITE" id="PS50076">
    <property type="entry name" value="DNAJ_2"/>
    <property type="match status" value="1"/>
</dbReference>
<dbReference type="PROSITE" id="PS51188">
    <property type="entry name" value="ZF_CR"/>
    <property type="match status" value="1"/>
</dbReference>
<gene>
    <name evidence="1" type="primary">dnaJ</name>
    <name type="ordered locus">TDE_0629</name>
</gene>
<organism>
    <name type="scientific">Treponema denticola (strain ATCC 35405 / DSM 14222 / CIP 103919 / JCM 8153 / KCTC 15104)</name>
    <dbReference type="NCBI Taxonomy" id="243275"/>
    <lineage>
        <taxon>Bacteria</taxon>
        <taxon>Pseudomonadati</taxon>
        <taxon>Spirochaetota</taxon>
        <taxon>Spirochaetia</taxon>
        <taxon>Spirochaetales</taxon>
        <taxon>Treponemataceae</taxon>
        <taxon>Treponema</taxon>
    </lineage>
</organism>
<accession>Q73Q15</accession>
<proteinExistence type="inferred from homology"/>
<sequence length="379" mass="41084">MPASKRDYYEVLGVDKKASNDDIKKAYRKLAIKYHPDKNQGDKAAEEKFKEATEAYEILIDEKKRSMYDQFGHAGVDGMSGGGGYDPSAFQGFEDIFGGSFSDIFENLFGGGFSSRSSGFGGRHAGPVRGSNLRYDLQISFVDAVYGKKAELSYTRNEKCSECHGTGSESGSSKRMCPDCKGTGQVRQSTGFFSISRPCPTCGGEGSIIEKPCKKCGGNGLERKKQRIIVTIPAGVENGKRITIPSQGNAGQAGGDYGDLFVFIFVQAHPYFERNGIDLYCAVPISMTQAALGGEINIKSLDEKTLRLKIPAGTQNGKLLRIRGEGVPTGIGRKGDLYIQIQVQIPSKLSSNSKKLLQEISAIEGENENPNLIPLKDLP</sequence>
<feature type="chain" id="PRO_0000070923" description="Chaperone protein DnaJ">
    <location>
        <begin position="1"/>
        <end position="379"/>
    </location>
</feature>
<feature type="domain" description="J" evidence="1">
    <location>
        <begin position="7"/>
        <end position="72"/>
    </location>
</feature>
<feature type="repeat" description="CXXCXGXG motif">
    <location>
        <begin position="160"/>
        <end position="167"/>
    </location>
</feature>
<feature type="repeat" description="CXXCXGXG motif">
    <location>
        <begin position="177"/>
        <end position="184"/>
    </location>
</feature>
<feature type="repeat" description="CXXCXGXG motif">
    <location>
        <begin position="199"/>
        <end position="206"/>
    </location>
</feature>
<feature type="repeat" description="CXXCXGXG motif">
    <location>
        <begin position="213"/>
        <end position="220"/>
    </location>
</feature>
<feature type="zinc finger region" description="CR-type" evidence="1">
    <location>
        <begin position="147"/>
        <end position="225"/>
    </location>
</feature>
<feature type="binding site" evidence="1">
    <location>
        <position position="160"/>
    </location>
    <ligand>
        <name>Zn(2+)</name>
        <dbReference type="ChEBI" id="CHEBI:29105"/>
        <label>1</label>
    </ligand>
</feature>
<feature type="binding site" evidence="1">
    <location>
        <position position="163"/>
    </location>
    <ligand>
        <name>Zn(2+)</name>
        <dbReference type="ChEBI" id="CHEBI:29105"/>
        <label>1</label>
    </ligand>
</feature>
<feature type="binding site" evidence="1">
    <location>
        <position position="177"/>
    </location>
    <ligand>
        <name>Zn(2+)</name>
        <dbReference type="ChEBI" id="CHEBI:29105"/>
        <label>2</label>
    </ligand>
</feature>
<feature type="binding site" evidence="1">
    <location>
        <position position="180"/>
    </location>
    <ligand>
        <name>Zn(2+)</name>
        <dbReference type="ChEBI" id="CHEBI:29105"/>
        <label>2</label>
    </ligand>
</feature>
<feature type="binding site" evidence="1">
    <location>
        <position position="199"/>
    </location>
    <ligand>
        <name>Zn(2+)</name>
        <dbReference type="ChEBI" id="CHEBI:29105"/>
        <label>2</label>
    </ligand>
</feature>
<feature type="binding site" evidence="1">
    <location>
        <position position="202"/>
    </location>
    <ligand>
        <name>Zn(2+)</name>
        <dbReference type="ChEBI" id="CHEBI:29105"/>
        <label>2</label>
    </ligand>
</feature>
<feature type="binding site" evidence="1">
    <location>
        <position position="213"/>
    </location>
    <ligand>
        <name>Zn(2+)</name>
        <dbReference type="ChEBI" id="CHEBI:29105"/>
        <label>1</label>
    </ligand>
</feature>
<feature type="binding site" evidence="1">
    <location>
        <position position="216"/>
    </location>
    <ligand>
        <name>Zn(2+)</name>
        <dbReference type="ChEBI" id="CHEBI:29105"/>
        <label>1</label>
    </ligand>
</feature>
<keyword id="KW-0143">Chaperone</keyword>
<keyword id="KW-0963">Cytoplasm</keyword>
<keyword id="KW-0235">DNA replication</keyword>
<keyword id="KW-0479">Metal-binding</keyword>
<keyword id="KW-1185">Reference proteome</keyword>
<keyword id="KW-0677">Repeat</keyword>
<keyword id="KW-0346">Stress response</keyword>
<keyword id="KW-0862">Zinc</keyword>
<keyword id="KW-0863">Zinc-finger</keyword>
<protein>
    <recommendedName>
        <fullName evidence="1">Chaperone protein DnaJ</fullName>
    </recommendedName>
</protein>
<comment type="function">
    <text evidence="1">Participates actively in the response to hyperosmotic and heat shock by preventing the aggregation of stress-denatured proteins and by disaggregating proteins, also in an autonomous, DnaK-independent fashion. Unfolded proteins bind initially to DnaJ; upon interaction with the DnaJ-bound protein, DnaK hydrolyzes its bound ATP, resulting in the formation of a stable complex. GrpE releases ADP from DnaK; ATP binding to DnaK triggers the release of the substrate protein, thus completing the reaction cycle. Several rounds of ATP-dependent interactions between DnaJ, DnaK and GrpE are required for fully efficient folding. Also involved, together with DnaK and GrpE, in the DNA replication of plasmids through activation of initiation proteins.</text>
</comment>
<comment type="cofactor">
    <cofactor evidence="1">
        <name>Zn(2+)</name>
        <dbReference type="ChEBI" id="CHEBI:29105"/>
    </cofactor>
    <text evidence="1">Binds 2 Zn(2+) ions per monomer.</text>
</comment>
<comment type="subunit">
    <text evidence="1">Homodimer.</text>
</comment>
<comment type="subcellular location">
    <subcellularLocation>
        <location evidence="1">Cytoplasm</location>
    </subcellularLocation>
</comment>
<comment type="domain">
    <text evidence="1">The J domain is necessary and sufficient to stimulate DnaK ATPase activity. Zinc center 1 plays an important role in the autonomous, DnaK-independent chaperone activity of DnaJ. Zinc center 2 is essential for interaction with DnaK and for DnaJ activity.</text>
</comment>
<comment type="similarity">
    <text evidence="1">Belongs to the DnaJ family.</text>
</comment>
<comment type="sequence caution" evidence="2">
    <conflict type="erroneous initiation">
        <sequence resource="EMBL-CDS" id="AAS11124"/>
    </conflict>
</comment>
<reference key="1">
    <citation type="journal article" date="2004" name="Proc. Natl. Acad. Sci. U.S.A.">
        <title>Comparison of the genome of the oral pathogen Treponema denticola with other spirochete genomes.</title>
        <authorList>
            <person name="Seshadri R."/>
            <person name="Myers G.S.A."/>
            <person name="Tettelin H."/>
            <person name="Eisen J.A."/>
            <person name="Heidelberg J.F."/>
            <person name="Dodson R.J."/>
            <person name="Davidsen T.M."/>
            <person name="DeBoy R.T."/>
            <person name="Fouts D.E."/>
            <person name="Haft D.H."/>
            <person name="Selengut J."/>
            <person name="Ren Q."/>
            <person name="Brinkac L.M."/>
            <person name="Madupu R."/>
            <person name="Kolonay J.F."/>
            <person name="Durkin S.A."/>
            <person name="Daugherty S.C."/>
            <person name="Shetty J."/>
            <person name="Shvartsbeyn A."/>
            <person name="Gebregeorgis E."/>
            <person name="Geer K."/>
            <person name="Tsegaye G."/>
            <person name="Malek J.A."/>
            <person name="Ayodeji B."/>
            <person name="Shatsman S."/>
            <person name="McLeod M.P."/>
            <person name="Smajs D."/>
            <person name="Howell J.K."/>
            <person name="Pal S."/>
            <person name="Amin A."/>
            <person name="Vashisth P."/>
            <person name="McNeill T.Z."/>
            <person name="Xiang Q."/>
            <person name="Sodergren E."/>
            <person name="Baca E."/>
            <person name="Weinstock G.M."/>
            <person name="Norris S.J."/>
            <person name="Fraser C.M."/>
            <person name="Paulsen I.T."/>
        </authorList>
    </citation>
    <scope>NUCLEOTIDE SEQUENCE [LARGE SCALE GENOMIC DNA]</scope>
    <source>
        <strain>ATCC 35405 / DSM 14222 / CIP 103919 / JCM 8153 / KCTC 15104</strain>
    </source>
</reference>
<evidence type="ECO:0000255" key="1">
    <source>
        <dbReference type="HAMAP-Rule" id="MF_01152"/>
    </source>
</evidence>
<evidence type="ECO:0000305" key="2"/>
<name>DNAJ_TREDE</name>